<gene>
    <name type="primary">SLC25A34</name>
</gene>
<dbReference type="EMBL" id="BC102816">
    <property type="protein sequence ID" value="AAI02817.1"/>
    <property type="molecule type" value="mRNA"/>
</dbReference>
<dbReference type="RefSeq" id="NP_001029669.1">
    <property type="nucleotide sequence ID" value="NM_001034497.2"/>
</dbReference>
<dbReference type="SMR" id="Q3SZK0"/>
<dbReference type="FunCoup" id="Q3SZK0">
    <property type="interactions" value="162"/>
</dbReference>
<dbReference type="STRING" id="9913.ENSBTAP00000024921"/>
<dbReference type="PaxDb" id="9913-ENSBTAP00000024921"/>
<dbReference type="Ensembl" id="ENSBTAT00000024921.6">
    <property type="protein sequence ID" value="ENSBTAP00000024921.4"/>
    <property type="gene ID" value="ENSBTAG00000018723.7"/>
</dbReference>
<dbReference type="GeneID" id="515553"/>
<dbReference type="KEGG" id="bta:515553"/>
<dbReference type="CTD" id="284723"/>
<dbReference type="VEuPathDB" id="HostDB:ENSBTAG00000018723"/>
<dbReference type="VGNC" id="VGNC:34760">
    <property type="gene designation" value="SLC25A34"/>
</dbReference>
<dbReference type="eggNOG" id="KOG0755">
    <property type="taxonomic scope" value="Eukaryota"/>
</dbReference>
<dbReference type="GeneTree" id="ENSGT00940000160016"/>
<dbReference type="HOGENOM" id="CLU_015166_14_3_1"/>
<dbReference type="InParanoid" id="Q3SZK0"/>
<dbReference type="OMA" id="KANCEDH"/>
<dbReference type="OrthoDB" id="6703404at2759"/>
<dbReference type="TreeFam" id="TF324506"/>
<dbReference type="Proteomes" id="UP000009136">
    <property type="component" value="Chromosome 16"/>
</dbReference>
<dbReference type="Bgee" id="ENSBTAG00000018723">
    <property type="expression patterns" value="Expressed in corpus luteum and 97 other cell types or tissues"/>
</dbReference>
<dbReference type="GO" id="GO:0005743">
    <property type="term" value="C:mitochondrial inner membrane"/>
    <property type="evidence" value="ECO:0007669"/>
    <property type="project" value="UniProtKB-SubCell"/>
</dbReference>
<dbReference type="GO" id="GO:0001835">
    <property type="term" value="P:blastocyst hatching"/>
    <property type="evidence" value="ECO:0007669"/>
    <property type="project" value="Ensembl"/>
</dbReference>
<dbReference type="FunFam" id="1.50.40.10:FF:000039">
    <property type="entry name" value="Solute carrier family 25 member 35"/>
    <property type="match status" value="1"/>
</dbReference>
<dbReference type="Gene3D" id="1.50.40.10">
    <property type="entry name" value="Mitochondrial carrier domain"/>
    <property type="match status" value="1"/>
</dbReference>
<dbReference type="InterPro" id="IPR051508">
    <property type="entry name" value="Mito_Carrier_Antiporter"/>
</dbReference>
<dbReference type="InterPro" id="IPR018108">
    <property type="entry name" value="Mitochondrial_sb/sol_carrier"/>
</dbReference>
<dbReference type="InterPro" id="IPR023395">
    <property type="entry name" value="Mt_carrier_dom_sf"/>
</dbReference>
<dbReference type="PANTHER" id="PTHR45928">
    <property type="entry name" value="RE38146P"/>
    <property type="match status" value="1"/>
</dbReference>
<dbReference type="PANTHER" id="PTHR45928:SF3">
    <property type="entry name" value="SOLUTE CARRIER FAMILY 25 MEMBER 34"/>
    <property type="match status" value="1"/>
</dbReference>
<dbReference type="Pfam" id="PF00153">
    <property type="entry name" value="Mito_carr"/>
    <property type="match status" value="3"/>
</dbReference>
<dbReference type="SUPFAM" id="SSF103506">
    <property type="entry name" value="Mitochondrial carrier"/>
    <property type="match status" value="1"/>
</dbReference>
<dbReference type="PROSITE" id="PS50920">
    <property type="entry name" value="SOLCAR"/>
    <property type="match status" value="3"/>
</dbReference>
<sequence length="304" mass="32258">METVPPAVDLVLGASACCLACVFTNPLEVVKTRLQLQGELQKRGTYPRLYRGFVASVVAVVRADGLCGLQKGLAAGLLYQGLMNGVRFYCYSLACQAGLSQQPGGTVVAGAVAGALGAFVGSPAYLVKTQLQAQTVAAMAVGHQHHHESLLGALETIWRQQGLAGLWRGVGGAVPRVMVGSAAQLATFASAKAWVQERQWLPEDSWLVALAGGMISSIAVVAVMTPFDVVSTRLYNQPVDGAGRGKLYGGLTDCLVKIWRQEGPLALYKGLGPVYLRLGPHTILSMLFWDELRKLAGWGQHQGS</sequence>
<proteinExistence type="evidence at transcript level"/>
<reference key="1">
    <citation type="submission" date="2005-08" db="EMBL/GenBank/DDBJ databases">
        <authorList>
            <consortium name="NIH - Mammalian Gene Collection (MGC) project"/>
        </authorList>
    </citation>
    <scope>NUCLEOTIDE SEQUENCE [LARGE SCALE MRNA]</scope>
    <source>
        <strain>Crossbred X Angus</strain>
        <tissue>Ileum</tissue>
    </source>
</reference>
<organism>
    <name type="scientific">Bos taurus</name>
    <name type="common">Bovine</name>
    <dbReference type="NCBI Taxonomy" id="9913"/>
    <lineage>
        <taxon>Eukaryota</taxon>
        <taxon>Metazoa</taxon>
        <taxon>Chordata</taxon>
        <taxon>Craniata</taxon>
        <taxon>Vertebrata</taxon>
        <taxon>Euteleostomi</taxon>
        <taxon>Mammalia</taxon>
        <taxon>Eutheria</taxon>
        <taxon>Laurasiatheria</taxon>
        <taxon>Artiodactyla</taxon>
        <taxon>Ruminantia</taxon>
        <taxon>Pecora</taxon>
        <taxon>Bovidae</taxon>
        <taxon>Bovinae</taxon>
        <taxon>Bos</taxon>
    </lineage>
</organism>
<feature type="chain" id="PRO_0000291788" description="Solute carrier family 25 member 34">
    <location>
        <begin position="1"/>
        <end position="304"/>
    </location>
</feature>
<feature type="transmembrane region" description="Helical; Name=1" evidence="3">
    <location>
        <begin position="7"/>
        <end position="27"/>
    </location>
</feature>
<feature type="transmembrane region" description="Helical; Name=2" evidence="3">
    <location>
        <begin position="45"/>
        <end position="65"/>
    </location>
</feature>
<feature type="transmembrane region" description="Helical; Name=3" evidence="3">
    <location>
        <begin position="98"/>
        <end position="120"/>
    </location>
</feature>
<feature type="transmembrane region" description="Helical; Name=4" evidence="3">
    <location>
        <begin position="170"/>
        <end position="191"/>
    </location>
</feature>
<feature type="transmembrane region" description="Helical; Name=5" evidence="3">
    <location>
        <begin position="206"/>
        <end position="226"/>
    </location>
</feature>
<feature type="transmembrane region" description="Helical; Name=6" evidence="3">
    <location>
        <begin position="278"/>
        <end position="301"/>
    </location>
</feature>
<feature type="repeat" description="Solcar 1">
    <location>
        <begin position="4"/>
        <end position="97"/>
    </location>
</feature>
<feature type="repeat" description="Solcar 2">
    <location>
        <begin position="101"/>
        <end position="194"/>
    </location>
</feature>
<feature type="repeat" description="Solcar 3">
    <location>
        <begin position="204"/>
        <end position="295"/>
    </location>
</feature>
<accession>Q3SZK0</accession>
<name>S2534_BOVIN</name>
<comment type="function">
    <text evidence="2">Putative antiporter that exchanges dicarboxylates and sulfur oxoanions across the inner membrane of mitochondria.</text>
</comment>
<comment type="catalytic activity">
    <reaction evidence="2">
        <text>a dicarboxylate(in) + sulfate(out) = a dicarboxylate(out) + sulfate(in)</text>
        <dbReference type="Rhea" id="RHEA:76595"/>
        <dbReference type="ChEBI" id="CHEBI:16189"/>
        <dbReference type="ChEBI" id="CHEBI:28965"/>
    </reaction>
</comment>
<comment type="subcellular location">
    <subcellularLocation>
        <location evidence="1">Mitochondrion inner membrane</location>
        <topology evidence="1">Multi-pass membrane protein</topology>
    </subcellularLocation>
</comment>
<comment type="similarity">
    <text evidence="4">Belongs to the mitochondrial carrier (TC 2.A.29) family.</text>
</comment>
<evidence type="ECO:0000250" key="1"/>
<evidence type="ECO:0000250" key="2">
    <source>
        <dbReference type="UniProtKB" id="Q6PIV7"/>
    </source>
</evidence>
<evidence type="ECO:0000255" key="3"/>
<evidence type="ECO:0000305" key="4"/>
<keyword id="KW-0472">Membrane</keyword>
<keyword id="KW-0496">Mitochondrion</keyword>
<keyword id="KW-0999">Mitochondrion inner membrane</keyword>
<keyword id="KW-1185">Reference proteome</keyword>
<keyword id="KW-0677">Repeat</keyword>
<keyword id="KW-0812">Transmembrane</keyword>
<keyword id="KW-1133">Transmembrane helix</keyword>
<keyword id="KW-0813">Transport</keyword>
<protein>
    <recommendedName>
        <fullName>Solute carrier family 25 member 34</fullName>
    </recommendedName>
</protein>